<comment type="function">
    <text evidence="1">Binds 23S rRNA and is also seen to make contacts with the A and possibly P site tRNAs.</text>
</comment>
<comment type="subunit">
    <text evidence="1">Part of the 50S ribosomal subunit.</text>
</comment>
<comment type="similarity">
    <text evidence="1">Belongs to the universal ribosomal protein uL16 family.</text>
</comment>
<organism>
    <name type="scientific">Thermotoga maritima (strain ATCC 43589 / DSM 3109 / JCM 10099 / NBRC 100826 / MSB8)</name>
    <dbReference type="NCBI Taxonomy" id="243274"/>
    <lineage>
        <taxon>Bacteria</taxon>
        <taxon>Thermotogati</taxon>
        <taxon>Thermotogota</taxon>
        <taxon>Thermotogae</taxon>
        <taxon>Thermotogales</taxon>
        <taxon>Thermotogaceae</taxon>
        <taxon>Thermotoga</taxon>
    </lineage>
</organism>
<evidence type="ECO:0000255" key="1">
    <source>
        <dbReference type="HAMAP-Rule" id="MF_01342"/>
    </source>
</evidence>
<evidence type="ECO:0000305" key="2"/>
<name>RL16_THEMA</name>
<gene>
    <name evidence="1" type="primary">rplP</name>
    <name type="ordered locus">TM_1493</name>
</gene>
<dbReference type="EMBL" id="Z21677">
    <property type="protein sequence ID" value="CAA79784.1"/>
    <property type="molecule type" value="Genomic_DNA"/>
</dbReference>
<dbReference type="EMBL" id="AE000512">
    <property type="protein sequence ID" value="AAD36559.1"/>
    <property type="molecule type" value="Genomic_DNA"/>
</dbReference>
<dbReference type="PIR" id="S40195">
    <property type="entry name" value="S40195"/>
</dbReference>
<dbReference type="RefSeq" id="NP_229293.1">
    <property type="nucleotide sequence ID" value="NC_000853.1"/>
</dbReference>
<dbReference type="RefSeq" id="WP_004081822.1">
    <property type="nucleotide sequence ID" value="NC_000853.1"/>
</dbReference>
<dbReference type="SMR" id="P38509"/>
<dbReference type="FunCoup" id="P38509">
    <property type="interactions" value="351"/>
</dbReference>
<dbReference type="STRING" id="243274.TM_1493"/>
<dbReference type="PaxDb" id="243274-THEMA_06835"/>
<dbReference type="EnsemblBacteria" id="AAD36559">
    <property type="protein sequence ID" value="AAD36559"/>
    <property type="gene ID" value="TM_1493"/>
</dbReference>
<dbReference type="KEGG" id="tma:TM1493"/>
<dbReference type="KEGG" id="tmi:THEMA_06835"/>
<dbReference type="KEGG" id="tmm:Tmari_1501"/>
<dbReference type="KEGG" id="tmw:THMA_1525"/>
<dbReference type="eggNOG" id="COG0197">
    <property type="taxonomic scope" value="Bacteria"/>
</dbReference>
<dbReference type="InParanoid" id="P38509"/>
<dbReference type="OrthoDB" id="9802589at2"/>
<dbReference type="Proteomes" id="UP000008183">
    <property type="component" value="Chromosome"/>
</dbReference>
<dbReference type="GO" id="GO:0022625">
    <property type="term" value="C:cytosolic large ribosomal subunit"/>
    <property type="evidence" value="ECO:0000318"/>
    <property type="project" value="GO_Central"/>
</dbReference>
<dbReference type="GO" id="GO:0019843">
    <property type="term" value="F:rRNA binding"/>
    <property type="evidence" value="ECO:0000318"/>
    <property type="project" value="GO_Central"/>
</dbReference>
<dbReference type="GO" id="GO:0003735">
    <property type="term" value="F:structural constituent of ribosome"/>
    <property type="evidence" value="ECO:0000318"/>
    <property type="project" value="GO_Central"/>
</dbReference>
<dbReference type="GO" id="GO:0000049">
    <property type="term" value="F:tRNA binding"/>
    <property type="evidence" value="ECO:0007669"/>
    <property type="project" value="UniProtKB-KW"/>
</dbReference>
<dbReference type="GO" id="GO:0006412">
    <property type="term" value="P:translation"/>
    <property type="evidence" value="ECO:0007669"/>
    <property type="project" value="UniProtKB-UniRule"/>
</dbReference>
<dbReference type="CDD" id="cd01433">
    <property type="entry name" value="Ribosomal_L16_L10e"/>
    <property type="match status" value="1"/>
</dbReference>
<dbReference type="FunFam" id="3.90.1170.10:FF:000001">
    <property type="entry name" value="50S ribosomal protein L16"/>
    <property type="match status" value="1"/>
</dbReference>
<dbReference type="Gene3D" id="3.90.1170.10">
    <property type="entry name" value="Ribosomal protein L10e/L16"/>
    <property type="match status" value="1"/>
</dbReference>
<dbReference type="HAMAP" id="MF_01342">
    <property type="entry name" value="Ribosomal_uL16"/>
    <property type="match status" value="1"/>
</dbReference>
<dbReference type="InterPro" id="IPR047873">
    <property type="entry name" value="Ribosomal_uL16"/>
</dbReference>
<dbReference type="InterPro" id="IPR000114">
    <property type="entry name" value="Ribosomal_uL16_bact-type"/>
</dbReference>
<dbReference type="InterPro" id="IPR020798">
    <property type="entry name" value="Ribosomal_uL16_CS"/>
</dbReference>
<dbReference type="InterPro" id="IPR016180">
    <property type="entry name" value="Ribosomal_uL16_dom"/>
</dbReference>
<dbReference type="InterPro" id="IPR036920">
    <property type="entry name" value="Ribosomal_uL16_sf"/>
</dbReference>
<dbReference type="NCBIfam" id="TIGR01164">
    <property type="entry name" value="rplP_bact"/>
    <property type="match status" value="1"/>
</dbReference>
<dbReference type="PANTHER" id="PTHR12220">
    <property type="entry name" value="50S/60S RIBOSOMAL PROTEIN L16"/>
    <property type="match status" value="1"/>
</dbReference>
<dbReference type="PANTHER" id="PTHR12220:SF13">
    <property type="entry name" value="LARGE RIBOSOMAL SUBUNIT PROTEIN UL16M"/>
    <property type="match status" value="1"/>
</dbReference>
<dbReference type="Pfam" id="PF00252">
    <property type="entry name" value="Ribosomal_L16"/>
    <property type="match status" value="1"/>
</dbReference>
<dbReference type="PRINTS" id="PR00060">
    <property type="entry name" value="RIBOSOMALL16"/>
</dbReference>
<dbReference type="SUPFAM" id="SSF54686">
    <property type="entry name" value="Ribosomal protein L16p/L10e"/>
    <property type="match status" value="1"/>
</dbReference>
<dbReference type="PROSITE" id="PS00586">
    <property type="entry name" value="RIBOSOMAL_L16_1"/>
    <property type="match status" value="1"/>
</dbReference>
<dbReference type="PROSITE" id="PS00701">
    <property type="entry name" value="RIBOSOMAL_L16_2"/>
    <property type="match status" value="1"/>
</dbReference>
<feature type="chain" id="PRO_0000062235" description="Large ribosomal subunit protein uL16">
    <location>
        <begin position="1"/>
        <end position="142"/>
    </location>
</feature>
<protein>
    <recommendedName>
        <fullName evidence="1">Large ribosomal subunit protein uL16</fullName>
    </recommendedName>
    <alternativeName>
        <fullName evidence="2">50S ribosomal protein L16</fullName>
    </alternativeName>
</protein>
<sequence length="142" mass="15978">MLMPRRVKYRKQQRGRMKGKAKGGTFVQFGEWGLKALEPAWITAQQIEACRIAMLRVMKRSGKIWIRIFPDKPYTKKPPESRMGKGKGNVEGWVAVVKPGKILFEVAGVDEETAHEALRYAASKLPIATKIVPRHHIGGEAV</sequence>
<keyword id="KW-1185">Reference proteome</keyword>
<keyword id="KW-0687">Ribonucleoprotein</keyword>
<keyword id="KW-0689">Ribosomal protein</keyword>
<keyword id="KW-0694">RNA-binding</keyword>
<keyword id="KW-0699">rRNA-binding</keyword>
<keyword id="KW-0820">tRNA-binding</keyword>
<accession>P38509</accession>
<proteinExistence type="inferred from homology"/>
<reference key="1">
    <citation type="journal article" date="1994" name="J. Bacteriol.">
        <title>Phylogenetic depth of S10 and spc operons: cloning and sequencing of a ribosomal protein gene cluster from the extremely thermophilic bacterium Thermotoga maritima.</title>
        <authorList>
            <person name="Sanangelantoni A.M."/>
            <person name="Bocchetta M."/>
            <person name="Cammarano P."/>
            <person name="Tiboni O."/>
        </authorList>
    </citation>
    <scope>NUCLEOTIDE SEQUENCE [GENOMIC DNA]</scope>
    <source>
        <strain>ATCC 43589 / DSM 3109 / JCM 10099 / NBRC 100826 / MSB8</strain>
    </source>
</reference>
<reference key="2">
    <citation type="journal article" date="1999" name="Nature">
        <title>Evidence for lateral gene transfer between Archaea and Bacteria from genome sequence of Thermotoga maritima.</title>
        <authorList>
            <person name="Nelson K.E."/>
            <person name="Clayton R.A."/>
            <person name="Gill S.R."/>
            <person name="Gwinn M.L."/>
            <person name="Dodson R.J."/>
            <person name="Haft D.H."/>
            <person name="Hickey E.K."/>
            <person name="Peterson J.D."/>
            <person name="Nelson W.C."/>
            <person name="Ketchum K.A."/>
            <person name="McDonald L.A."/>
            <person name="Utterback T.R."/>
            <person name="Malek J.A."/>
            <person name="Linher K.D."/>
            <person name="Garrett M.M."/>
            <person name="Stewart A.M."/>
            <person name="Cotton M.D."/>
            <person name="Pratt M.S."/>
            <person name="Phillips C.A."/>
            <person name="Richardson D.L."/>
            <person name="Heidelberg J.F."/>
            <person name="Sutton G.G."/>
            <person name="Fleischmann R.D."/>
            <person name="Eisen J.A."/>
            <person name="White O."/>
            <person name="Salzberg S.L."/>
            <person name="Smith H.O."/>
            <person name="Venter J.C."/>
            <person name="Fraser C.M."/>
        </authorList>
    </citation>
    <scope>NUCLEOTIDE SEQUENCE [LARGE SCALE GENOMIC DNA]</scope>
    <source>
        <strain>ATCC 43589 / DSM 3109 / JCM 10099 / NBRC 100826 / MSB8</strain>
    </source>
</reference>